<gene>
    <name evidence="1" type="primary">rplF</name>
    <name type="ordered locus">Sfum_1570</name>
</gene>
<feature type="chain" id="PRO_1000055322" description="Large ribosomal subunit protein uL6">
    <location>
        <begin position="1"/>
        <end position="179"/>
    </location>
</feature>
<sequence>MSRVGKLPITIPKGVDVSLDEPLLTIKGPKGTLARRMPGDVEVHLEQGAVLIRRKDESNKSRSLHGLVRALVNNMVHGVSEGFVISLEIQGTGYRADAQNNVLNLSLGYSHPIQFVLPEGIKGAVDRNTIRLEGIDKELLGQTAARIRALRPAEPYKGKGIRYAGEHIHRKVGKTGSKK</sequence>
<organism>
    <name type="scientific">Syntrophobacter fumaroxidans (strain DSM 10017 / MPOB)</name>
    <dbReference type="NCBI Taxonomy" id="335543"/>
    <lineage>
        <taxon>Bacteria</taxon>
        <taxon>Pseudomonadati</taxon>
        <taxon>Thermodesulfobacteriota</taxon>
        <taxon>Syntrophobacteria</taxon>
        <taxon>Syntrophobacterales</taxon>
        <taxon>Syntrophobacteraceae</taxon>
        <taxon>Syntrophobacter</taxon>
    </lineage>
</organism>
<accession>A0LIK5</accession>
<reference key="1">
    <citation type="submission" date="2006-10" db="EMBL/GenBank/DDBJ databases">
        <title>Complete sequence of Syntrophobacter fumaroxidans MPOB.</title>
        <authorList>
            <consortium name="US DOE Joint Genome Institute"/>
            <person name="Copeland A."/>
            <person name="Lucas S."/>
            <person name="Lapidus A."/>
            <person name="Barry K."/>
            <person name="Detter J.C."/>
            <person name="Glavina del Rio T."/>
            <person name="Hammon N."/>
            <person name="Israni S."/>
            <person name="Pitluck S."/>
            <person name="Goltsman E.G."/>
            <person name="Martinez M."/>
            <person name="Schmutz J."/>
            <person name="Larimer F."/>
            <person name="Land M."/>
            <person name="Hauser L."/>
            <person name="Kyrpides N."/>
            <person name="Kim E."/>
            <person name="Boone D.R."/>
            <person name="Brockman F."/>
            <person name="Culley D."/>
            <person name="Ferry J."/>
            <person name="Gunsalus R."/>
            <person name="McInerney M.J."/>
            <person name="Morrison M."/>
            <person name="Plugge C."/>
            <person name="Rohlin L."/>
            <person name="Scholten J."/>
            <person name="Sieber J."/>
            <person name="Stams A.J.M."/>
            <person name="Worm P."/>
            <person name="Henstra A.M."/>
            <person name="Richardson P."/>
        </authorList>
    </citation>
    <scope>NUCLEOTIDE SEQUENCE [LARGE SCALE GENOMIC DNA]</scope>
    <source>
        <strain>DSM 10017 / MPOB</strain>
    </source>
</reference>
<protein>
    <recommendedName>
        <fullName evidence="1">Large ribosomal subunit protein uL6</fullName>
    </recommendedName>
    <alternativeName>
        <fullName evidence="2">50S ribosomal protein L6</fullName>
    </alternativeName>
</protein>
<keyword id="KW-1185">Reference proteome</keyword>
<keyword id="KW-0687">Ribonucleoprotein</keyword>
<keyword id="KW-0689">Ribosomal protein</keyword>
<keyword id="KW-0694">RNA-binding</keyword>
<keyword id="KW-0699">rRNA-binding</keyword>
<evidence type="ECO:0000255" key="1">
    <source>
        <dbReference type="HAMAP-Rule" id="MF_01365"/>
    </source>
</evidence>
<evidence type="ECO:0000305" key="2"/>
<name>RL6_SYNFM</name>
<comment type="function">
    <text evidence="1">This protein binds to the 23S rRNA, and is important in its secondary structure. It is located near the subunit interface in the base of the L7/L12 stalk, and near the tRNA binding site of the peptidyltransferase center.</text>
</comment>
<comment type="subunit">
    <text evidence="1">Part of the 50S ribosomal subunit.</text>
</comment>
<comment type="similarity">
    <text evidence="1">Belongs to the universal ribosomal protein uL6 family.</text>
</comment>
<proteinExistence type="inferred from homology"/>
<dbReference type="EMBL" id="CP000478">
    <property type="protein sequence ID" value="ABK17257.1"/>
    <property type="molecule type" value="Genomic_DNA"/>
</dbReference>
<dbReference type="RefSeq" id="WP_011698427.1">
    <property type="nucleotide sequence ID" value="NC_008554.1"/>
</dbReference>
<dbReference type="SMR" id="A0LIK5"/>
<dbReference type="FunCoup" id="A0LIK5">
    <property type="interactions" value="652"/>
</dbReference>
<dbReference type="STRING" id="335543.Sfum_1570"/>
<dbReference type="KEGG" id="sfu:Sfum_1570"/>
<dbReference type="eggNOG" id="COG0097">
    <property type="taxonomic scope" value="Bacteria"/>
</dbReference>
<dbReference type="HOGENOM" id="CLU_065464_1_2_7"/>
<dbReference type="InParanoid" id="A0LIK5"/>
<dbReference type="OrthoDB" id="9805007at2"/>
<dbReference type="Proteomes" id="UP000001784">
    <property type="component" value="Chromosome"/>
</dbReference>
<dbReference type="GO" id="GO:0022625">
    <property type="term" value="C:cytosolic large ribosomal subunit"/>
    <property type="evidence" value="ECO:0007669"/>
    <property type="project" value="TreeGrafter"/>
</dbReference>
<dbReference type="GO" id="GO:0019843">
    <property type="term" value="F:rRNA binding"/>
    <property type="evidence" value="ECO:0007669"/>
    <property type="project" value="UniProtKB-UniRule"/>
</dbReference>
<dbReference type="GO" id="GO:0003735">
    <property type="term" value="F:structural constituent of ribosome"/>
    <property type="evidence" value="ECO:0007669"/>
    <property type="project" value="InterPro"/>
</dbReference>
<dbReference type="GO" id="GO:0002181">
    <property type="term" value="P:cytoplasmic translation"/>
    <property type="evidence" value="ECO:0007669"/>
    <property type="project" value="TreeGrafter"/>
</dbReference>
<dbReference type="FunFam" id="3.90.930.12:FF:000002">
    <property type="entry name" value="50S ribosomal protein L6"/>
    <property type="match status" value="1"/>
</dbReference>
<dbReference type="Gene3D" id="3.90.930.12">
    <property type="entry name" value="Ribosomal protein L6, alpha-beta domain"/>
    <property type="match status" value="2"/>
</dbReference>
<dbReference type="HAMAP" id="MF_01365_B">
    <property type="entry name" value="Ribosomal_uL6_B"/>
    <property type="match status" value="1"/>
</dbReference>
<dbReference type="InterPro" id="IPR000702">
    <property type="entry name" value="Ribosomal_uL6-like"/>
</dbReference>
<dbReference type="InterPro" id="IPR036789">
    <property type="entry name" value="Ribosomal_uL6-like_a/b-dom_sf"/>
</dbReference>
<dbReference type="InterPro" id="IPR020040">
    <property type="entry name" value="Ribosomal_uL6_a/b-dom"/>
</dbReference>
<dbReference type="InterPro" id="IPR019906">
    <property type="entry name" value="Ribosomal_uL6_bac-type"/>
</dbReference>
<dbReference type="NCBIfam" id="TIGR03654">
    <property type="entry name" value="L6_bact"/>
    <property type="match status" value="1"/>
</dbReference>
<dbReference type="PANTHER" id="PTHR11655">
    <property type="entry name" value="60S/50S RIBOSOMAL PROTEIN L6/L9"/>
    <property type="match status" value="1"/>
</dbReference>
<dbReference type="PANTHER" id="PTHR11655:SF14">
    <property type="entry name" value="LARGE RIBOSOMAL SUBUNIT PROTEIN UL6M"/>
    <property type="match status" value="1"/>
</dbReference>
<dbReference type="Pfam" id="PF00347">
    <property type="entry name" value="Ribosomal_L6"/>
    <property type="match status" value="2"/>
</dbReference>
<dbReference type="PIRSF" id="PIRSF002162">
    <property type="entry name" value="Ribosomal_L6"/>
    <property type="match status" value="1"/>
</dbReference>
<dbReference type="PRINTS" id="PR00059">
    <property type="entry name" value="RIBOSOMALL6"/>
</dbReference>
<dbReference type="SUPFAM" id="SSF56053">
    <property type="entry name" value="Ribosomal protein L6"/>
    <property type="match status" value="2"/>
</dbReference>